<keyword id="KW-1185">Reference proteome</keyword>
<keyword id="KW-0946">Virion</keyword>
<comment type="subcellular location">
    <subcellularLocation>
        <location evidence="2">Virion</location>
    </subcellularLocation>
</comment>
<dbReference type="EMBL" id="AY653733">
    <property type="protein sequence ID" value="AAV50908.1"/>
    <property type="molecule type" value="Genomic_DNA"/>
</dbReference>
<dbReference type="SMR" id="Q5UR10"/>
<dbReference type="Proteomes" id="UP000001134">
    <property type="component" value="Genome"/>
</dbReference>
<dbReference type="GO" id="GO:0044423">
    <property type="term" value="C:virion component"/>
    <property type="evidence" value="ECO:0007669"/>
    <property type="project" value="UniProtKB-KW"/>
</dbReference>
<sequence length="184" mass="19647">MYKMPFDRAGCLNNVGGFGSCGSNYNRINDAKLLKRELHFTETLLDTINRECASGFNNYGYGGGNCGFNDCGFGGCGPAPCGPGGFGGGFGGGFGGGFGGPFNGGAGVEVEGWGYGPQPFQGGFGGGYFDKDDDKKKKKKDDKKDDPCNPFCKPCYKPVCNNPKEKVCKCKECKRASRKIYEDY</sequence>
<gene>
    <name type="ordered locus">MIMI_L647</name>
</gene>
<protein>
    <recommendedName>
        <fullName>Uncharacterized protein L647</fullName>
    </recommendedName>
</protein>
<organismHost>
    <name type="scientific">Acanthamoeba polyphaga</name>
    <name type="common">Amoeba</name>
    <dbReference type="NCBI Taxonomy" id="5757"/>
</organismHost>
<organism>
    <name type="scientific">Acanthamoeba polyphaga mimivirus</name>
    <name type="common">APMV</name>
    <dbReference type="NCBI Taxonomy" id="212035"/>
    <lineage>
        <taxon>Viruses</taxon>
        <taxon>Varidnaviria</taxon>
        <taxon>Bamfordvirae</taxon>
        <taxon>Nucleocytoviricota</taxon>
        <taxon>Megaviricetes</taxon>
        <taxon>Imitervirales</taxon>
        <taxon>Mimiviridae</taxon>
        <taxon>Megamimivirinae</taxon>
        <taxon>Mimivirus</taxon>
        <taxon>Mimivirus bradfordmassiliense</taxon>
    </lineage>
</organism>
<proteinExistence type="evidence at protein level"/>
<name>YL647_MIMIV</name>
<feature type="chain" id="PRO_0000071302" description="Uncharacterized protein L647">
    <location>
        <begin position="1"/>
        <end position="184"/>
    </location>
</feature>
<feature type="region of interest" description="Disordered" evidence="1">
    <location>
        <begin position="130"/>
        <end position="149"/>
    </location>
</feature>
<accession>Q5UR10</accession>
<reference key="1">
    <citation type="journal article" date="2004" name="Science">
        <title>The 1.2-megabase genome sequence of Mimivirus.</title>
        <authorList>
            <person name="Raoult D."/>
            <person name="Audic S."/>
            <person name="Robert C."/>
            <person name="Abergel C."/>
            <person name="Renesto P."/>
            <person name="Ogata H."/>
            <person name="La Scola B."/>
            <person name="Susan M."/>
            <person name="Claverie J.-M."/>
        </authorList>
    </citation>
    <scope>NUCLEOTIDE SEQUENCE [LARGE SCALE GENOMIC DNA]</scope>
    <source>
        <strain>Rowbotham-Bradford</strain>
    </source>
</reference>
<reference key="2">
    <citation type="journal article" date="2006" name="J. Virol.">
        <title>Mimivirus giant particles incorporate a large fraction of anonymous and unique gene products.</title>
        <authorList>
            <person name="Renesto P."/>
            <person name="Abergel C."/>
            <person name="Decloquement P."/>
            <person name="Moinier D."/>
            <person name="Azza S."/>
            <person name="Ogata H."/>
            <person name="Fourquet P."/>
            <person name="Gorvel J.-P."/>
            <person name="Claverie J.-M."/>
            <person name="Raoult D."/>
        </authorList>
    </citation>
    <scope>IDENTIFICATION BY MASS SPECTROMETRY [LARGE SCALE ANALYSIS]</scope>
    <scope>SUBCELLULAR LOCATION</scope>
</reference>
<evidence type="ECO:0000256" key="1">
    <source>
        <dbReference type="SAM" id="MobiDB-lite"/>
    </source>
</evidence>
<evidence type="ECO:0000269" key="2">
    <source>
    </source>
</evidence>